<dbReference type="EC" id="2.7.7.6" evidence="1"/>
<dbReference type="EMBL" id="DQ226511">
    <property type="protein sequence ID" value="ABB20949.1"/>
    <property type="molecule type" value="Genomic_DNA"/>
</dbReference>
<dbReference type="RefSeq" id="YP_762252.1">
    <property type="nucleotide sequence ID" value="NC_008359.1"/>
</dbReference>
<dbReference type="SMR" id="Q09X26"/>
<dbReference type="GeneID" id="4290595"/>
<dbReference type="GO" id="GO:0009507">
    <property type="term" value="C:chloroplast"/>
    <property type="evidence" value="ECO:0007669"/>
    <property type="project" value="UniProtKB-SubCell"/>
</dbReference>
<dbReference type="GO" id="GO:0000428">
    <property type="term" value="C:DNA-directed RNA polymerase complex"/>
    <property type="evidence" value="ECO:0007669"/>
    <property type="project" value="UniProtKB-KW"/>
</dbReference>
<dbReference type="GO" id="GO:0005739">
    <property type="term" value="C:mitochondrion"/>
    <property type="evidence" value="ECO:0007669"/>
    <property type="project" value="GOC"/>
</dbReference>
<dbReference type="GO" id="GO:0003677">
    <property type="term" value="F:DNA binding"/>
    <property type="evidence" value="ECO:0007669"/>
    <property type="project" value="UniProtKB-UniRule"/>
</dbReference>
<dbReference type="GO" id="GO:0003899">
    <property type="term" value="F:DNA-directed RNA polymerase activity"/>
    <property type="evidence" value="ECO:0007669"/>
    <property type="project" value="UniProtKB-UniRule"/>
</dbReference>
<dbReference type="GO" id="GO:0000287">
    <property type="term" value="F:magnesium ion binding"/>
    <property type="evidence" value="ECO:0007669"/>
    <property type="project" value="UniProtKB-UniRule"/>
</dbReference>
<dbReference type="GO" id="GO:0008270">
    <property type="term" value="F:zinc ion binding"/>
    <property type="evidence" value="ECO:0007669"/>
    <property type="project" value="UniProtKB-UniRule"/>
</dbReference>
<dbReference type="GO" id="GO:0006351">
    <property type="term" value="P:DNA-templated transcription"/>
    <property type="evidence" value="ECO:0007669"/>
    <property type="project" value="UniProtKB-UniRule"/>
</dbReference>
<dbReference type="FunFam" id="1.10.40.90:FF:000002">
    <property type="entry name" value="DNA-directed RNA polymerase subunit"/>
    <property type="match status" value="1"/>
</dbReference>
<dbReference type="FunFam" id="4.10.860.120:FF:000007">
    <property type="entry name" value="DNA-directed RNA polymerase subunit gamma"/>
    <property type="match status" value="1"/>
</dbReference>
<dbReference type="Gene3D" id="1.10.40.90">
    <property type="match status" value="1"/>
</dbReference>
<dbReference type="Gene3D" id="2.40.40.20">
    <property type="match status" value="1"/>
</dbReference>
<dbReference type="Gene3D" id="4.10.860.120">
    <property type="entry name" value="RNA polymerase II, clamp domain"/>
    <property type="match status" value="1"/>
</dbReference>
<dbReference type="Gene3D" id="1.10.274.100">
    <property type="entry name" value="RNA polymerase Rpb1, domain 3"/>
    <property type="match status" value="1"/>
</dbReference>
<dbReference type="HAMAP" id="MF_01323">
    <property type="entry name" value="RNApol_bact_RpoC1"/>
    <property type="match status" value="1"/>
</dbReference>
<dbReference type="InterPro" id="IPR045867">
    <property type="entry name" value="DNA-dir_RpoC_beta_prime"/>
</dbReference>
<dbReference type="InterPro" id="IPR000722">
    <property type="entry name" value="RNA_pol_asu"/>
</dbReference>
<dbReference type="InterPro" id="IPR006592">
    <property type="entry name" value="RNA_pol_N"/>
</dbReference>
<dbReference type="InterPro" id="IPR007080">
    <property type="entry name" value="RNA_pol_Rpb1_1"/>
</dbReference>
<dbReference type="InterPro" id="IPR042102">
    <property type="entry name" value="RNA_pol_Rpb1_3_sf"/>
</dbReference>
<dbReference type="InterPro" id="IPR044893">
    <property type="entry name" value="RNA_pol_Rpb1_clamp_domain"/>
</dbReference>
<dbReference type="InterPro" id="IPR034678">
    <property type="entry name" value="RNApol_RpoC1"/>
</dbReference>
<dbReference type="PANTHER" id="PTHR19376">
    <property type="entry name" value="DNA-DIRECTED RNA POLYMERASE"/>
    <property type="match status" value="1"/>
</dbReference>
<dbReference type="PANTHER" id="PTHR19376:SF54">
    <property type="entry name" value="DNA-DIRECTED RNA POLYMERASE SUBUNIT BETA"/>
    <property type="match status" value="1"/>
</dbReference>
<dbReference type="Pfam" id="PF04997">
    <property type="entry name" value="RNA_pol_Rpb1_1"/>
    <property type="match status" value="2"/>
</dbReference>
<dbReference type="Pfam" id="PF00623">
    <property type="entry name" value="RNA_pol_Rpb1_2"/>
    <property type="match status" value="1"/>
</dbReference>
<dbReference type="SMART" id="SM00663">
    <property type="entry name" value="RPOLA_N"/>
    <property type="match status" value="1"/>
</dbReference>
<dbReference type="SUPFAM" id="SSF64484">
    <property type="entry name" value="beta and beta-prime subunits of DNA dependent RNA-polymerase"/>
    <property type="match status" value="1"/>
</dbReference>
<name>RPOC1_MORIN</name>
<protein>
    <recommendedName>
        <fullName evidence="1">DNA-directed RNA polymerase subunit beta'</fullName>
        <ecNumber evidence="1">2.7.7.6</ecNumber>
    </recommendedName>
    <alternativeName>
        <fullName evidence="1">PEP</fullName>
    </alternativeName>
    <alternativeName>
        <fullName evidence="1">Plastid-encoded RNA polymerase subunit beta'</fullName>
        <shortName evidence="1">RNA polymerase subunit beta'</shortName>
    </alternativeName>
</protein>
<sequence length="684" mass="78944">MIDRYKHQQLRIGSVSPQQISAWAKKILPNGEIIGEVTKPYTFHYKTNKPEKDGLFCERIFGPIKSGICACGNYRVIGNDKEDPKFCEQCGVEFVDSRIRRYQMGYIKLACPVTHVWYLKRLPSYIANLLDKPLKELEGLVYCDFSFARPIAKKPTFLRLRGSFEYEIQSWKYSIPLFFTTQGFDAFRNREISTGAGAIREQLADLDLPIIIDYSLVEWKELGEERPTVNEWEDRKVGRRKDFLVRRMELAKHFIRTNIEPEWMVLCLLPVLPPELRPIIQIDGGKLMSSDINELYRRVIYRNNTLIDLLTTSRSTPGELVMCQEKLVQEAVDTLFDNGIRGQPMRDGHNKVYKSFSDIIEGKEGRFRETLLGKRVDYSGRSVIVVGPSLSLHRCGLPREIAIELFQTFVIRGLIRQHFASNIGVAKSKIREKEPVVWEILQDVMQGHPVLLNRAPTLHRLGIQAFQPILVEGHAICLHPLVCKGFNADFDGDQMAVHVPLSLEAQAEARLLMFSHTNLLSPAIGDPISVPTQDMLIGLYVLTSGNRRGICANRYNPCNYRNYQNERIDDNKYKYTKTQEKEPFFCNSYDAIGAYRQKRIHLDSPLWLRWRLDQRVITSREAPIEVHYQSLGTYHEIYGHLLIVRSIKKEILCIYLRTTVGHISLYREIEEAIQGFFRACSYGT</sequence>
<feature type="chain" id="PRO_0000277172" description="DNA-directed RNA polymerase subunit beta'">
    <location>
        <begin position="1"/>
        <end position="684"/>
    </location>
</feature>
<feature type="binding site" evidence="1">
    <location>
        <position position="69"/>
    </location>
    <ligand>
        <name>Zn(2+)</name>
        <dbReference type="ChEBI" id="CHEBI:29105"/>
    </ligand>
</feature>
<feature type="binding site" evidence="1">
    <location>
        <position position="71"/>
    </location>
    <ligand>
        <name>Zn(2+)</name>
        <dbReference type="ChEBI" id="CHEBI:29105"/>
    </ligand>
</feature>
<feature type="binding site" evidence="1">
    <location>
        <position position="87"/>
    </location>
    <ligand>
        <name>Zn(2+)</name>
        <dbReference type="ChEBI" id="CHEBI:29105"/>
    </ligand>
</feature>
<feature type="binding site" evidence="1">
    <location>
        <position position="90"/>
    </location>
    <ligand>
        <name>Zn(2+)</name>
        <dbReference type="ChEBI" id="CHEBI:29105"/>
    </ligand>
</feature>
<feature type="binding site" evidence="1">
    <location>
        <position position="489"/>
    </location>
    <ligand>
        <name>Mg(2+)</name>
        <dbReference type="ChEBI" id="CHEBI:18420"/>
    </ligand>
</feature>
<feature type="binding site" evidence="1">
    <location>
        <position position="491"/>
    </location>
    <ligand>
        <name>Mg(2+)</name>
        <dbReference type="ChEBI" id="CHEBI:18420"/>
    </ligand>
</feature>
<feature type="binding site" evidence="1">
    <location>
        <position position="493"/>
    </location>
    <ligand>
        <name>Mg(2+)</name>
        <dbReference type="ChEBI" id="CHEBI:18420"/>
    </ligand>
</feature>
<accession>Q09X26</accession>
<reference key="1">
    <citation type="submission" date="2005-09" db="EMBL/GenBank/DDBJ databases">
        <title>The chloroplast genome of mulberry: structural features and comparative analysis.</title>
        <authorList>
            <person name="Ravi V."/>
            <person name="Khurana J.P."/>
            <person name="Tyagi A.K."/>
            <person name="Khurana P."/>
        </authorList>
    </citation>
    <scope>NUCLEOTIDE SEQUENCE [LARGE SCALE GENOMIC DNA]</scope>
    <source>
        <strain>cv. K2</strain>
    </source>
</reference>
<gene>
    <name evidence="1" type="primary">rpoC1</name>
    <name type="ordered locus">MoinCp012</name>
</gene>
<organism>
    <name type="scientific">Morus indica</name>
    <name type="common">Mulberry</name>
    <dbReference type="NCBI Taxonomy" id="248361"/>
    <lineage>
        <taxon>Eukaryota</taxon>
        <taxon>Viridiplantae</taxon>
        <taxon>Streptophyta</taxon>
        <taxon>Embryophyta</taxon>
        <taxon>Tracheophyta</taxon>
        <taxon>Spermatophyta</taxon>
        <taxon>Magnoliopsida</taxon>
        <taxon>eudicotyledons</taxon>
        <taxon>Gunneridae</taxon>
        <taxon>Pentapetalae</taxon>
        <taxon>rosids</taxon>
        <taxon>fabids</taxon>
        <taxon>Rosales</taxon>
        <taxon>Moraceae</taxon>
        <taxon>Moreae</taxon>
        <taxon>Morus</taxon>
    </lineage>
</organism>
<geneLocation type="chloroplast"/>
<comment type="function">
    <text evidence="1">DNA-dependent RNA polymerase catalyzes the transcription of DNA into RNA using the four ribonucleoside triphosphates as substrates.</text>
</comment>
<comment type="catalytic activity">
    <reaction evidence="1">
        <text>RNA(n) + a ribonucleoside 5'-triphosphate = RNA(n+1) + diphosphate</text>
        <dbReference type="Rhea" id="RHEA:21248"/>
        <dbReference type="Rhea" id="RHEA-COMP:14527"/>
        <dbReference type="Rhea" id="RHEA-COMP:17342"/>
        <dbReference type="ChEBI" id="CHEBI:33019"/>
        <dbReference type="ChEBI" id="CHEBI:61557"/>
        <dbReference type="ChEBI" id="CHEBI:140395"/>
        <dbReference type="EC" id="2.7.7.6"/>
    </reaction>
</comment>
<comment type="cofactor">
    <cofactor evidence="1">
        <name>Mg(2+)</name>
        <dbReference type="ChEBI" id="CHEBI:18420"/>
    </cofactor>
    <text evidence="1">Binds 1 Mg(2+) ion per subunit.</text>
</comment>
<comment type="cofactor">
    <cofactor evidence="1">
        <name>Zn(2+)</name>
        <dbReference type="ChEBI" id="CHEBI:29105"/>
    </cofactor>
    <text evidence="1">Binds 1 Zn(2+) ion per subunit.</text>
</comment>
<comment type="subunit">
    <text evidence="1">In plastids the minimal PEP RNA polymerase catalytic core is composed of four subunits: alpha, beta, beta', and beta''. When a (nuclear-encoded) sigma factor is associated with the core the holoenzyme is formed, which can initiate transcription.</text>
</comment>
<comment type="subcellular location">
    <subcellularLocation>
        <location evidence="1">Plastid</location>
        <location evidence="1">Chloroplast</location>
    </subcellularLocation>
</comment>
<comment type="similarity">
    <text evidence="1">Belongs to the RNA polymerase beta' chain family. RpoC1 subfamily.</text>
</comment>
<evidence type="ECO:0000255" key="1">
    <source>
        <dbReference type="HAMAP-Rule" id="MF_01323"/>
    </source>
</evidence>
<keyword id="KW-0150">Chloroplast</keyword>
<keyword id="KW-0240">DNA-directed RNA polymerase</keyword>
<keyword id="KW-0460">Magnesium</keyword>
<keyword id="KW-0479">Metal-binding</keyword>
<keyword id="KW-0548">Nucleotidyltransferase</keyword>
<keyword id="KW-0934">Plastid</keyword>
<keyword id="KW-0804">Transcription</keyword>
<keyword id="KW-0808">Transferase</keyword>
<keyword id="KW-0862">Zinc</keyword>
<proteinExistence type="inferred from homology"/>